<name>TTCA2_FRATT</name>
<gene>
    <name evidence="1" type="primary">ttcA2</name>
    <name type="ordered locus">FTT_1187</name>
</gene>
<comment type="function">
    <text evidence="1">Catalyzes the ATP-dependent 2-thiolation of cytidine in position 32 of tRNA, to form 2-thiocytidine (s(2)C32). The sulfur atoms are provided by the cysteine/cysteine desulfurase (IscS) system.</text>
</comment>
<comment type="catalytic activity">
    <reaction evidence="1">
        <text>cytidine(32) in tRNA + S-sulfanyl-L-cysteinyl-[cysteine desulfurase] + AH2 + ATP = 2-thiocytidine(32) in tRNA + L-cysteinyl-[cysteine desulfurase] + A + AMP + diphosphate + H(+)</text>
        <dbReference type="Rhea" id="RHEA:57048"/>
        <dbReference type="Rhea" id="RHEA-COMP:10288"/>
        <dbReference type="Rhea" id="RHEA-COMP:12157"/>
        <dbReference type="Rhea" id="RHEA-COMP:12158"/>
        <dbReference type="Rhea" id="RHEA-COMP:14821"/>
        <dbReference type="ChEBI" id="CHEBI:13193"/>
        <dbReference type="ChEBI" id="CHEBI:15378"/>
        <dbReference type="ChEBI" id="CHEBI:17499"/>
        <dbReference type="ChEBI" id="CHEBI:29950"/>
        <dbReference type="ChEBI" id="CHEBI:30616"/>
        <dbReference type="ChEBI" id="CHEBI:33019"/>
        <dbReference type="ChEBI" id="CHEBI:61963"/>
        <dbReference type="ChEBI" id="CHEBI:82748"/>
        <dbReference type="ChEBI" id="CHEBI:141453"/>
        <dbReference type="ChEBI" id="CHEBI:456215"/>
    </reaction>
    <physiologicalReaction direction="left-to-right" evidence="1">
        <dbReference type="Rhea" id="RHEA:57049"/>
    </physiologicalReaction>
</comment>
<comment type="cofactor">
    <cofactor evidence="1">
        <name>Mg(2+)</name>
        <dbReference type="ChEBI" id="CHEBI:18420"/>
    </cofactor>
</comment>
<comment type="cofactor">
    <cofactor evidence="1">
        <name>[4Fe-4S] cluster</name>
        <dbReference type="ChEBI" id="CHEBI:49883"/>
    </cofactor>
    <text evidence="1">Binds 1 [4Fe-4S] cluster per subunit. The cluster is chelated by three Cys residues, the fourth Fe has a free coordination site that may bind a sulfur atom transferred from the persulfide of IscS.</text>
</comment>
<comment type="pathway">
    <text evidence="1">tRNA modification.</text>
</comment>
<comment type="subunit">
    <text evidence="1">Homodimer.</text>
</comment>
<comment type="subcellular location">
    <subcellularLocation>
        <location evidence="1">Cytoplasm</location>
    </subcellularLocation>
</comment>
<comment type="miscellaneous">
    <text evidence="1">The thiolation reaction likely consists of two steps: a first activation step by ATP to form an adenylated intermediate of the target base of tRNA, and a second nucleophilic substitution step of the sulfur (S) atom supplied by the hydrosulfide attached to the Fe-S cluster.</text>
</comment>
<comment type="similarity">
    <text evidence="1">Belongs to the TtcA family.</text>
</comment>
<organism>
    <name type="scientific">Francisella tularensis subsp. tularensis (strain SCHU S4 / Schu 4)</name>
    <dbReference type="NCBI Taxonomy" id="177416"/>
    <lineage>
        <taxon>Bacteria</taxon>
        <taxon>Pseudomonadati</taxon>
        <taxon>Pseudomonadota</taxon>
        <taxon>Gammaproteobacteria</taxon>
        <taxon>Thiotrichales</taxon>
        <taxon>Francisellaceae</taxon>
        <taxon>Francisella</taxon>
    </lineage>
</organism>
<accession>Q5NFP3</accession>
<sequence>MTKTEKKLRHYITKAIADYKLLDKGDKVMLCLSGGKDSFGLLKVLHGLIEDKTYDIDLHVYTLDQSQPGWDDSQLRKYLDDLGVSYEIETKNTYGVIIDKVPEGKTYCSLCSRLRRGNIYRYAKEHKMDKIILGHHRDDLIQSLLMSILYQGQIKSMPPKFVTQDGENTVIRPMVLVQERDLIEFAKEENFPIIPCNLCGSQENLKRKKVKKLIQDLALENPKVPSNILNSLSNVLPSHLMDKNLLNSLEN</sequence>
<reference key="1">
    <citation type="journal article" date="2005" name="Nat. Genet.">
        <title>The complete genome sequence of Francisella tularensis, the causative agent of tularemia.</title>
        <authorList>
            <person name="Larsson P."/>
            <person name="Oyston P.C.F."/>
            <person name="Chain P."/>
            <person name="Chu M.C."/>
            <person name="Duffield M."/>
            <person name="Fuxelius H.-H."/>
            <person name="Garcia E."/>
            <person name="Haelltorp G."/>
            <person name="Johansson D."/>
            <person name="Isherwood K.E."/>
            <person name="Karp P.D."/>
            <person name="Larsson E."/>
            <person name="Liu Y."/>
            <person name="Michell S."/>
            <person name="Prior J."/>
            <person name="Prior R."/>
            <person name="Malfatti S."/>
            <person name="Sjoestedt A."/>
            <person name="Svensson K."/>
            <person name="Thompson N."/>
            <person name="Vergez L."/>
            <person name="Wagg J.K."/>
            <person name="Wren B.W."/>
            <person name="Lindler L.E."/>
            <person name="Andersson S.G.E."/>
            <person name="Forsman M."/>
            <person name="Titball R.W."/>
        </authorList>
    </citation>
    <scope>NUCLEOTIDE SEQUENCE [LARGE SCALE GENOMIC DNA]</scope>
    <source>
        <strain>SCHU S4 / Schu 4</strain>
    </source>
</reference>
<evidence type="ECO:0000255" key="1">
    <source>
        <dbReference type="HAMAP-Rule" id="MF_01850"/>
    </source>
</evidence>
<proteinExistence type="inferred from homology"/>
<protein>
    <recommendedName>
        <fullName evidence="1">tRNA-cytidine(32) 2-sulfurtransferase 2</fullName>
        <ecNumber evidence="1">2.8.1.-</ecNumber>
    </recommendedName>
    <alternativeName>
        <fullName evidence="1">Two-thiocytidine biosynthesis protein A 2</fullName>
    </alternativeName>
    <alternativeName>
        <fullName evidence="1">tRNA 2-thiocytidine biosynthesis protein TtcA 2</fullName>
    </alternativeName>
</protein>
<dbReference type="EC" id="2.8.1.-" evidence="1"/>
<dbReference type="EMBL" id="AJ749949">
    <property type="protein sequence ID" value="CAG45820.1"/>
    <property type="molecule type" value="Genomic_DNA"/>
</dbReference>
<dbReference type="RefSeq" id="WP_003021427.1">
    <property type="nucleotide sequence ID" value="NC_006570.2"/>
</dbReference>
<dbReference type="RefSeq" id="YP_170149.1">
    <property type="nucleotide sequence ID" value="NC_006570.2"/>
</dbReference>
<dbReference type="SMR" id="Q5NFP3"/>
<dbReference type="STRING" id="177416.FTT_1187"/>
<dbReference type="DNASU" id="3190998"/>
<dbReference type="EnsemblBacteria" id="CAG45820">
    <property type="protein sequence ID" value="CAG45820"/>
    <property type="gene ID" value="FTT_1187"/>
</dbReference>
<dbReference type="KEGG" id="ftu:FTT_1187"/>
<dbReference type="eggNOG" id="COG0037">
    <property type="taxonomic scope" value="Bacteria"/>
</dbReference>
<dbReference type="OrthoDB" id="9801054at2"/>
<dbReference type="Proteomes" id="UP000001174">
    <property type="component" value="Chromosome"/>
</dbReference>
<dbReference type="GO" id="GO:0005737">
    <property type="term" value="C:cytoplasm"/>
    <property type="evidence" value="ECO:0007669"/>
    <property type="project" value="UniProtKB-SubCell"/>
</dbReference>
<dbReference type="GO" id="GO:0051539">
    <property type="term" value="F:4 iron, 4 sulfur cluster binding"/>
    <property type="evidence" value="ECO:0007669"/>
    <property type="project" value="UniProtKB-UniRule"/>
</dbReference>
<dbReference type="GO" id="GO:0005524">
    <property type="term" value="F:ATP binding"/>
    <property type="evidence" value="ECO:0007669"/>
    <property type="project" value="UniProtKB-UniRule"/>
</dbReference>
<dbReference type="GO" id="GO:0000287">
    <property type="term" value="F:magnesium ion binding"/>
    <property type="evidence" value="ECO:0007669"/>
    <property type="project" value="UniProtKB-UniRule"/>
</dbReference>
<dbReference type="GO" id="GO:0016783">
    <property type="term" value="F:sulfurtransferase activity"/>
    <property type="evidence" value="ECO:0007669"/>
    <property type="project" value="UniProtKB-UniRule"/>
</dbReference>
<dbReference type="GO" id="GO:0000049">
    <property type="term" value="F:tRNA binding"/>
    <property type="evidence" value="ECO:0007669"/>
    <property type="project" value="UniProtKB-KW"/>
</dbReference>
<dbReference type="GO" id="GO:0034227">
    <property type="term" value="P:tRNA thio-modification"/>
    <property type="evidence" value="ECO:0007669"/>
    <property type="project" value="UniProtKB-UniRule"/>
</dbReference>
<dbReference type="CDD" id="cd24138">
    <property type="entry name" value="TtcA-like"/>
    <property type="match status" value="1"/>
</dbReference>
<dbReference type="Gene3D" id="3.40.50.620">
    <property type="entry name" value="HUPs"/>
    <property type="match status" value="1"/>
</dbReference>
<dbReference type="HAMAP" id="MF_01850">
    <property type="entry name" value="TtcA"/>
    <property type="match status" value="1"/>
</dbReference>
<dbReference type="InterPro" id="IPR014729">
    <property type="entry name" value="Rossmann-like_a/b/a_fold"/>
</dbReference>
<dbReference type="InterPro" id="IPR011063">
    <property type="entry name" value="TilS/TtcA_N"/>
</dbReference>
<dbReference type="InterPro" id="IPR012089">
    <property type="entry name" value="tRNA_Cyd_32_2_STrfase"/>
</dbReference>
<dbReference type="InterPro" id="IPR035107">
    <property type="entry name" value="tRNA_thiolation_TtcA_Ctu1"/>
</dbReference>
<dbReference type="NCBIfam" id="NF007972">
    <property type="entry name" value="PRK10696.1"/>
    <property type="match status" value="1"/>
</dbReference>
<dbReference type="PANTHER" id="PTHR43686:SF1">
    <property type="entry name" value="AMINOTRAN_5 DOMAIN-CONTAINING PROTEIN"/>
    <property type="match status" value="1"/>
</dbReference>
<dbReference type="PANTHER" id="PTHR43686">
    <property type="entry name" value="SULFURTRANSFERASE-RELATED"/>
    <property type="match status" value="1"/>
</dbReference>
<dbReference type="Pfam" id="PF01171">
    <property type="entry name" value="ATP_bind_3"/>
    <property type="match status" value="1"/>
</dbReference>
<dbReference type="PIRSF" id="PIRSF004976">
    <property type="entry name" value="ATPase_YdaO"/>
    <property type="match status" value="1"/>
</dbReference>
<dbReference type="SUPFAM" id="SSF52402">
    <property type="entry name" value="Adenine nucleotide alpha hydrolases-like"/>
    <property type="match status" value="1"/>
</dbReference>
<feature type="chain" id="PRO_0000348739" description="tRNA-cytidine(32) 2-sulfurtransferase 2">
    <location>
        <begin position="1"/>
        <end position="251"/>
    </location>
</feature>
<feature type="short sequence motif" description="PP-loop motif" evidence="1">
    <location>
        <begin position="33"/>
        <end position="38"/>
    </location>
</feature>
<feature type="binding site" evidence="1">
    <location>
        <position position="108"/>
    </location>
    <ligand>
        <name>[4Fe-4S] cluster</name>
        <dbReference type="ChEBI" id="CHEBI:49883"/>
    </ligand>
</feature>
<feature type="binding site" evidence="1">
    <location>
        <position position="111"/>
    </location>
    <ligand>
        <name>[4Fe-4S] cluster</name>
        <dbReference type="ChEBI" id="CHEBI:49883"/>
    </ligand>
</feature>
<feature type="binding site" evidence="1">
    <location>
        <position position="199"/>
    </location>
    <ligand>
        <name>[4Fe-4S] cluster</name>
        <dbReference type="ChEBI" id="CHEBI:49883"/>
    </ligand>
</feature>
<keyword id="KW-0004">4Fe-4S</keyword>
<keyword id="KW-0067">ATP-binding</keyword>
<keyword id="KW-0963">Cytoplasm</keyword>
<keyword id="KW-0408">Iron</keyword>
<keyword id="KW-0411">Iron-sulfur</keyword>
<keyword id="KW-0460">Magnesium</keyword>
<keyword id="KW-0479">Metal-binding</keyword>
<keyword id="KW-0547">Nucleotide-binding</keyword>
<keyword id="KW-1185">Reference proteome</keyword>
<keyword id="KW-0694">RNA-binding</keyword>
<keyword id="KW-0808">Transferase</keyword>
<keyword id="KW-0819">tRNA processing</keyword>
<keyword id="KW-0820">tRNA-binding</keyword>